<feature type="chain" id="PRO_1000019134" description="Molybdenum cofactor guanylyltransferase">
    <location>
        <begin position="1"/>
        <end position="191"/>
    </location>
</feature>
<feature type="binding site" evidence="1">
    <location>
        <begin position="13"/>
        <end position="15"/>
    </location>
    <ligand>
        <name>GTP</name>
        <dbReference type="ChEBI" id="CHEBI:37565"/>
    </ligand>
</feature>
<feature type="binding site" evidence="1">
    <location>
        <position position="26"/>
    </location>
    <ligand>
        <name>GTP</name>
        <dbReference type="ChEBI" id="CHEBI:37565"/>
    </ligand>
</feature>
<feature type="binding site" evidence="1">
    <location>
        <position position="72"/>
    </location>
    <ligand>
        <name>GTP</name>
        <dbReference type="ChEBI" id="CHEBI:37565"/>
    </ligand>
</feature>
<feature type="binding site" evidence="1">
    <location>
        <position position="102"/>
    </location>
    <ligand>
        <name>GTP</name>
        <dbReference type="ChEBI" id="CHEBI:37565"/>
    </ligand>
</feature>
<feature type="binding site" evidence="1">
    <location>
        <position position="102"/>
    </location>
    <ligand>
        <name>Mg(2+)</name>
        <dbReference type="ChEBI" id="CHEBI:18420"/>
    </ligand>
</feature>
<reference key="1">
    <citation type="submission" date="2007-05" db="EMBL/GenBank/DDBJ databases">
        <title>Complete sequence of Pseudomonas putida F1.</title>
        <authorList>
            <consortium name="US DOE Joint Genome Institute"/>
            <person name="Copeland A."/>
            <person name="Lucas S."/>
            <person name="Lapidus A."/>
            <person name="Barry K."/>
            <person name="Detter J.C."/>
            <person name="Glavina del Rio T."/>
            <person name="Hammon N."/>
            <person name="Israni S."/>
            <person name="Dalin E."/>
            <person name="Tice H."/>
            <person name="Pitluck S."/>
            <person name="Chain P."/>
            <person name="Malfatti S."/>
            <person name="Shin M."/>
            <person name="Vergez L."/>
            <person name="Schmutz J."/>
            <person name="Larimer F."/>
            <person name="Land M."/>
            <person name="Hauser L."/>
            <person name="Kyrpides N."/>
            <person name="Lykidis A."/>
            <person name="Parales R."/>
            <person name="Richardson P."/>
        </authorList>
    </citation>
    <scope>NUCLEOTIDE SEQUENCE [LARGE SCALE GENOMIC DNA]</scope>
    <source>
        <strain>ATCC 700007 / DSM 6899 / JCM 31910 / BCRC 17059 / LMG 24140 / F1</strain>
    </source>
</reference>
<comment type="function">
    <text evidence="1">Transfers a GMP moiety from GTP to Mo-molybdopterin (Mo-MPT) cofactor (Moco or molybdenum cofactor) to form Mo-molybdopterin guanine dinucleotide (Mo-MGD) cofactor.</text>
</comment>
<comment type="catalytic activity">
    <reaction evidence="1">
        <text>Mo-molybdopterin + GTP + H(+) = Mo-molybdopterin guanine dinucleotide + diphosphate</text>
        <dbReference type="Rhea" id="RHEA:34243"/>
        <dbReference type="ChEBI" id="CHEBI:15378"/>
        <dbReference type="ChEBI" id="CHEBI:33019"/>
        <dbReference type="ChEBI" id="CHEBI:37565"/>
        <dbReference type="ChEBI" id="CHEBI:71302"/>
        <dbReference type="ChEBI" id="CHEBI:71310"/>
        <dbReference type="EC" id="2.7.7.77"/>
    </reaction>
</comment>
<comment type="cofactor">
    <cofactor evidence="1">
        <name>Mg(2+)</name>
        <dbReference type="ChEBI" id="CHEBI:18420"/>
    </cofactor>
</comment>
<comment type="subunit">
    <text evidence="1">Monomer.</text>
</comment>
<comment type="subcellular location">
    <subcellularLocation>
        <location evidence="1">Cytoplasm</location>
    </subcellularLocation>
</comment>
<comment type="domain">
    <text evidence="1">The N-terminal domain determines nucleotide recognition and specific binding, while the C-terminal domain determines the specific binding to the target protein.</text>
</comment>
<comment type="similarity">
    <text evidence="1">Belongs to the MobA family.</text>
</comment>
<organism>
    <name type="scientific">Pseudomonas putida (strain ATCC 700007 / DSM 6899 / JCM 31910 / BCRC 17059 / LMG 24140 / F1)</name>
    <dbReference type="NCBI Taxonomy" id="351746"/>
    <lineage>
        <taxon>Bacteria</taxon>
        <taxon>Pseudomonadati</taxon>
        <taxon>Pseudomonadota</taxon>
        <taxon>Gammaproteobacteria</taxon>
        <taxon>Pseudomonadales</taxon>
        <taxon>Pseudomonadaceae</taxon>
        <taxon>Pseudomonas</taxon>
    </lineage>
</organism>
<keyword id="KW-0963">Cytoplasm</keyword>
<keyword id="KW-0342">GTP-binding</keyword>
<keyword id="KW-0460">Magnesium</keyword>
<keyword id="KW-0479">Metal-binding</keyword>
<keyword id="KW-0501">Molybdenum cofactor biosynthesis</keyword>
<keyword id="KW-0547">Nucleotide-binding</keyword>
<keyword id="KW-0808">Transferase</keyword>
<dbReference type="EC" id="2.7.7.77" evidence="1"/>
<dbReference type="EMBL" id="CP000712">
    <property type="protein sequence ID" value="ABQ78451.1"/>
    <property type="molecule type" value="Genomic_DNA"/>
</dbReference>
<dbReference type="SMR" id="A5W2U1"/>
<dbReference type="KEGG" id="ppf:Pput_2312"/>
<dbReference type="eggNOG" id="COG0746">
    <property type="taxonomic scope" value="Bacteria"/>
</dbReference>
<dbReference type="HOGENOM" id="CLU_055597_5_1_6"/>
<dbReference type="GO" id="GO:0005737">
    <property type="term" value="C:cytoplasm"/>
    <property type="evidence" value="ECO:0007669"/>
    <property type="project" value="UniProtKB-SubCell"/>
</dbReference>
<dbReference type="GO" id="GO:0005525">
    <property type="term" value="F:GTP binding"/>
    <property type="evidence" value="ECO:0007669"/>
    <property type="project" value="UniProtKB-UniRule"/>
</dbReference>
<dbReference type="GO" id="GO:0046872">
    <property type="term" value="F:metal ion binding"/>
    <property type="evidence" value="ECO:0007669"/>
    <property type="project" value="UniProtKB-KW"/>
</dbReference>
<dbReference type="GO" id="GO:0061603">
    <property type="term" value="F:molybdenum cofactor guanylyltransferase activity"/>
    <property type="evidence" value="ECO:0007669"/>
    <property type="project" value="UniProtKB-EC"/>
</dbReference>
<dbReference type="GO" id="GO:1902758">
    <property type="term" value="P:bis(molybdopterin guanine dinucleotide)molybdenum biosynthetic process"/>
    <property type="evidence" value="ECO:0007669"/>
    <property type="project" value="TreeGrafter"/>
</dbReference>
<dbReference type="CDD" id="cd02503">
    <property type="entry name" value="MobA"/>
    <property type="match status" value="1"/>
</dbReference>
<dbReference type="Gene3D" id="3.90.550.10">
    <property type="entry name" value="Spore Coat Polysaccharide Biosynthesis Protein SpsA, Chain A"/>
    <property type="match status" value="1"/>
</dbReference>
<dbReference type="HAMAP" id="MF_00316">
    <property type="entry name" value="MobA"/>
    <property type="match status" value="1"/>
</dbReference>
<dbReference type="InterPro" id="IPR025877">
    <property type="entry name" value="MobA-like_NTP_Trfase"/>
</dbReference>
<dbReference type="InterPro" id="IPR013482">
    <property type="entry name" value="Molybde_CF_guanTrfase"/>
</dbReference>
<dbReference type="InterPro" id="IPR029044">
    <property type="entry name" value="Nucleotide-diphossugar_trans"/>
</dbReference>
<dbReference type="NCBIfam" id="TIGR02665">
    <property type="entry name" value="molyb_mobA"/>
    <property type="match status" value="1"/>
</dbReference>
<dbReference type="PANTHER" id="PTHR19136">
    <property type="entry name" value="MOLYBDENUM COFACTOR GUANYLYLTRANSFERASE"/>
    <property type="match status" value="1"/>
</dbReference>
<dbReference type="PANTHER" id="PTHR19136:SF81">
    <property type="entry name" value="MOLYBDENUM COFACTOR GUANYLYLTRANSFERASE"/>
    <property type="match status" value="1"/>
</dbReference>
<dbReference type="Pfam" id="PF12804">
    <property type="entry name" value="NTP_transf_3"/>
    <property type="match status" value="1"/>
</dbReference>
<dbReference type="SUPFAM" id="SSF53448">
    <property type="entry name" value="Nucleotide-diphospho-sugar transferases"/>
    <property type="match status" value="1"/>
</dbReference>
<accession>A5W2U1</accession>
<sequence>MPDARPPCSILILAGGRGQRMGGRDKGLVDWRGEPLIAHVHRVVRPLSDDLVISCNRNQADYRAYADRLVGDAEADFPGPLAGVIAGLKVARHGWVVVLACDAPLVDRELIEGLLRLAVAGNSAAMVRQGGFWQPMFSVLPKRVLPALEQAWAAGERSLQKALLREAVQGLECAESDRRLSNFNSPERLQD</sequence>
<proteinExistence type="inferred from homology"/>
<evidence type="ECO:0000255" key="1">
    <source>
        <dbReference type="HAMAP-Rule" id="MF_00316"/>
    </source>
</evidence>
<protein>
    <recommendedName>
        <fullName evidence="1">Molybdenum cofactor guanylyltransferase</fullName>
        <shortName evidence="1">MoCo guanylyltransferase</shortName>
        <ecNumber evidence="1">2.7.7.77</ecNumber>
    </recommendedName>
    <alternativeName>
        <fullName evidence="1">GTP:molybdopterin guanylyltransferase</fullName>
    </alternativeName>
    <alternativeName>
        <fullName evidence="1">Mo-MPT guanylyltransferase</fullName>
    </alternativeName>
    <alternativeName>
        <fullName evidence="1">Molybdopterin guanylyltransferase</fullName>
    </alternativeName>
    <alternativeName>
        <fullName evidence="1">Molybdopterin-guanine dinucleotide synthase</fullName>
        <shortName evidence="1">MGD synthase</shortName>
    </alternativeName>
</protein>
<gene>
    <name evidence="1" type="primary">mobA</name>
    <name type="ordered locus">Pput_2312</name>
</gene>
<name>MOBA_PSEP1</name>